<reference key="1">
    <citation type="journal article" date="1990" name="Virology">
        <title>Genome structure of tobacco necrosis virus strain A.</title>
        <authorList>
            <person name="Meulewaeter F."/>
            <person name="Seurinck J."/>
            <person name="van Emmelo J."/>
        </authorList>
    </citation>
    <scope>NUCLEOTIDE SEQUENCE [GENOMIC RNA]</scope>
</reference>
<comment type="function">
    <text evidence="2">RNA-dependent RNA polymerase that plays an essential role in the virus replication.</text>
</comment>
<comment type="catalytic activity">
    <reaction evidence="1">
        <text>RNA(n) + a ribonucleoside 5'-triphosphate = RNA(n+1) + diphosphate</text>
        <dbReference type="Rhea" id="RHEA:21248"/>
        <dbReference type="Rhea" id="RHEA-COMP:14527"/>
        <dbReference type="Rhea" id="RHEA-COMP:17342"/>
        <dbReference type="ChEBI" id="CHEBI:33019"/>
        <dbReference type="ChEBI" id="CHEBI:61557"/>
        <dbReference type="ChEBI" id="CHEBI:140395"/>
        <dbReference type="EC" id="2.7.7.48"/>
    </reaction>
</comment>
<comment type="miscellaneous">
    <text>Readthrough of the terminator UAG occurs at position 203.</text>
</comment>
<comment type="similarity">
    <text evidence="2">Belongs to the tombusviridae RNA polymerase family.</text>
</comment>
<keyword id="KW-0547">Nucleotide-binding</keyword>
<keyword id="KW-0548">Nucleotidyltransferase</keyword>
<keyword id="KW-1185">Reference proteome</keyword>
<keyword id="KW-1159">RNA suppression of termination</keyword>
<keyword id="KW-0696">RNA-directed RNA polymerase</keyword>
<keyword id="KW-0808">Transferase</keyword>
<keyword id="KW-0693">Viral RNA replication</keyword>
<protein>
    <recommendedName>
        <fullName>RNA-directed RNA polymerase</fullName>
        <ecNumber>2.7.7.48</ecNumber>
    </recommendedName>
    <alternativeName>
        <fullName>Protein p82</fullName>
    </alternativeName>
    <component>
        <recommendedName>
            <fullName>Protein p23</fullName>
        </recommendedName>
    </component>
</protein>
<organism>
    <name type="scientific">Tobacco necrosis virus (strain A)</name>
    <name type="common">TNV-A</name>
    <dbReference type="NCBI Taxonomy" id="12055"/>
    <lineage>
        <taxon>Viruses</taxon>
        <taxon>Riboviria</taxon>
        <taxon>Orthornavirae</taxon>
        <taxon>Kitrinoviricota</taxon>
        <taxon>Tolucaviricetes</taxon>
        <taxon>Tolivirales</taxon>
        <taxon>Tombusviridae</taxon>
        <taxon>Procedovirinae</taxon>
        <taxon>Alphanecrovirus</taxon>
        <taxon>Alphanecrovirus nicotianae</taxon>
    </lineage>
</organism>
<proteinExistence type="inferred from homology"/>
<gene>
    <name type="ORF">ORF1</name>
</gene>
<accession>P22958</accession>
<organismHost>
    <name type="scientific">Chenopodium amaranticolor</name>
    <dbReference type="NCBI Taxonomy" id="66262"/>
</organismHost>
<organismHost>
    <name type="scientific">Chenopodium quinoa</name>
    <name type="common">Quinoa</name>
    <dbReference type="NCBI Taxonomy" id="63459"/>
</organismHost>
<organismHost>
    <name type="scientific">Cucumis sativus</name>
    <name type="common">Cucumber</name>
    <dbReference type="NCBI Taxonomy" id="3659"/>
</organismHost>
<organismHost>
    <name type="scientific">Nicotiana clevelandii</name>
    <name type="common">Wild tobacco</name>
    <dbReference type="NCBI Taxonomy" id="81866"/>
</organismHost>
<organismHost>
    <name type="scientific">Nicotiana tabacum</name>
    <name type="common">Common tobacco</name>
    <dbReference type="NCBI Taxonomy" id="4097"/>
</organismHost>
<organismHost>
    <name type="scientific">Phaseolus vulgaris</name>
    <name type="common">Kidney bean</name>
    <name type="synonym">French bean</name>
    <dbReference type="NCBI Taxonomy" id="3885"/>
</organismHost>
<organismHost>
    <name type="scientific">Tulipa gesneriana</name>
    <name type="common">Garden tulip</name>
    <dbReference type="NCBI Taxonomy" id="13306"/>
</organismHost>
<name>RDRP_TNVA</name>
<feature type="chain" id="PRO_0000040217" description="RNA-directed RNA polymerase">
    <location>
        <begin position="1"/>
        <end position="724"/>
    </location>
</feature>
<feature type="chain" id="PRO_0000040218" description="Protein p23">
    <location>
        <begin position="1"/>
        <end position="202"/>
    </location>
</feature>
<feature type="domain" description="RdRp catalytic" evidence="1">
    <location>
        <begin position="424"/>
        <end position="540"/>
    </location>
</feature>
<feature type="sequence variant">
    <original>V</original>
    <variation>A</variation>
    <location>
        <position position="72"/>
    </location>
</feature>
<feature type="sequence variant">
    <original>K</original>
    <variation>R</variation>
    <location>
        <position position="699"/>
    </location>
</feature>
<sequence length="724" mass="82279">MELPNQHKQTAAEGFVSFLNWLCNPWRRQRTVNAAVAFQKDLLAIEDSEHLDDINECFEESAGAQSQRTKVVADGAYAPAKSNRTRRVRKQKKHKFVKYLVNEARAEFGLPKPTEANRLMVQHFLLRVCKDWGVVTAHVHGNVALALPLVFIPTEDDLLSRALMNTHATRAAVRGMDNVQGEGWWNNRLGIGGQVGLAFRSKXGCLERRPGFSTSVSRGEHPDLVVIPSGRPEKQRQLLRYSGIGGHLLIGIHNNSLSNLRRGLMERVFYVEGPNGLQDAPKPVKGAFRTLDKFRDLYTKNSWRHTPVTSEQFLMNYTGRKLTIYREAVDSLSHQPLSSRDAKLKTFVKAEKLNLSKKPDPAPRVIQPRSPRYNVCLGRYLRHYEHHAFKTIAKCFGEITVFKGFTLEQQGEIMRSKWNKYVNPVAVGLDASRFDQHVSVEALEYEHEFYLRDYPNDKQLKWLLKQQLCNVGTAFASDGIIKYKKKGCRMSGDMNTSLGNCILMCAMVYGLKEHLNINLSLANNGDDCVIVCEKADLKKLTSSIEPYFKQFGFKMEVEKPVDIFERIEFCQTQPVFDGSQYIMVRKPSVVTSKDVTSLIPCQTKAQYAEWLQAVGECGMSINGGIPVMQNFYQKLQTGIRRTKFTKTGEFQTNGLGYHSRYMHRVARVPSPETRLSFYLAFGITPDLQEALEIFYDTHKLELDDVIPTDTYQVSGEHLINGLPN</sequence>
<dbReference type="EC" id="2.7.7.48"/>
<dbReference type="EMBL" id="M33002">
    <property type="protein sequence ID" value="AAA86434.2"/>
    <property type="molecule type" value="Genomic_RNA"/>
</dbReference>
<dbReference type="PIR" id="A35523">
    <property type="entry name" value="RRWQTN"/>
</dbReference>
<dbReference type="RefSeq" id="NP_056825.2">
    <property type="nucleotide sequence ID" value="NC_001777.1"/>
</dbReference>
<dbReference type="KEGG" id="vg:1493899"/>
<dbReference type="OrthoDB" id="12338at10239"/>
<dbReference type="Proteomes" id="UP000000575">
    <property type="component" value="Genome"/>
</dbReference>
<dbReference type="GO" id="GO:0000166">
    <property type="term" value="F:nucleotide binding"/>
    <property type="evidence" value="ECO:0007669"/>
    <property type="project" value="UniProtKB-KW"/>
</dbReference>
<dbReference type="GO" id="GO:0003723">
    <property type="term" value="F:RNA binding"/>
    <property type="evidence" value="ECO:0007669"/>
    <property type="project" value="InterPro"/>
</dbReference>
<dbReference type="GO" id="GO:0003968">
    <property type="term" value="F:RNA-directed RNA polymerase activity"/>
    <property type="evidence" value="ECO:0007669"/>
    <property type="project" value="UniProtKB-KW"/>
</dbReference>
<dbReference type="GO" id="GO:0039694">
    <property type="term" value="P:viral RNA genome replication"/>
    <property type="evidence" value="ECO:0007669"/>
    <property type="project" value="InterPro"/>
</dbReference>
<dbReference type="CDD" id="cd23237">
    <property type="entry name" value="Alphanecrovirus_RdRp"/>
    <property type="match status" value="1"/>
</dbReference>
<dbReference type="Gene3D" id="3.30.70.270">
    <property type="match status" value="1"/>
</dbReference>
<dbReference type="InterPro" id="IPR043502">
    <property type="entry name" value="DNA/RNA_pol_sf"/>
</dbReference>
<dbReference type="InterPro" id="IPR043128">
    <property type="entry name" value="Rev_trsase/Diguanyl_cyclase"/>
</dbReference>
<dbReference type="InterPro" id="IPR007094">
    <property type="entry name" value="RNA-dir_pol_PSvirus"/>
</dbReference>
<dbReference type="InterPro" id="IPR002166">
    <property type="entry name" value="RNA_pol_HCV"/>
</dbReference>
<dbReference type="InterPro" id="IPR013707">
    <property type="entry name" value="Tombusvirus_p33"/>
</dbReference>
<dbReference type="Pfam" id="PF00998">
    <property type="entry name" value="RdRP_3"/>
    <property type="match status" value="1"/>
</dbReference>
<dbReference type="Pfam" id="PF08500">
    <property type="entry name" value="Tombus_P33"/>
    <property type="match status" value="1"/>
</dbReference>
<dbReference type="SUPFAM" id="SSF56672">
    <property type="entry name" value="DNA/RNA polymerases"/>
    <property type="match status" value="1"/>
</dbReference>
<dbReference type="PROSITE" id="PS50507">
    <property type="entry name" value="RDRP_SSRNA_POS"/>
    <property type="match status" value="1"/>
</dbReference>
<evidence type="ECO:0000255" key="1">
    <source>
        <dbReference type="PROSITE-ProRule" id="PRU00539"/>
    </source>
</evidence>
<evidence type="ECO:0000305" key="2"/>